<comment type="similarity">
    <text evidence="3">Belongs to the SCC3 family.</text>
</comment>
<comment type="caution">
    <text evidence="3">Could be the product of a pseudogene.</text>
</comment>
<dbReference type="EMBL" id="AK023257">
    <property type="protein sequence ID" value="BAB14491.1"/>
    <property type="molecule type" value="mRNA"/>
</dbReference>
<dbReference type="EMBL" id="CR457306">
    <property type="protein sequence ID" value="CAG33587.1"/>
    <property type="molecule type" value="mRNA"/>
</dbReference>
<dbReference type="EMBL" id="AC006480">
    <property type="protein sequence ID" value="AAS07569.1"/>
    <property type="molecule type" value="Genomic_DNA"/>
</dbReference>
<dbReference type="EMBL" id="CH471140">
    <property type="protein sequence ID" value="EAX07881.1"/>
    <property type="molecule type" value="Genomic_DNA"/>
</dbReference>
<dbReference type="EMBL" id="BC026058">
    <property type="protein sequence ID" value="AAH26058.1"/>
    <property type="molecule type" value="mRNA"/>
</dbReference>
<dbReference type="SMR" id="Q8TBR4"/>
<dbReference type="IntAct" id="Q8TBR4">
    <property type="interactions" value="7"/>
</dbReference>
<dbReference type="MINT" id="Q8TBR4"/>
<dbReference type="GlyGen" id="Q8TBR4">
    <property type="glycosylation" value="1 site, 1 O-linked glycan (1 site)"/>
</dbReference>
<dbReference type="iPTMnet" id="Q8TBR4"/>
<dbReference type="PhosphoSitePlus" id="Q8TBR4"/>
<dbReference type="BioMuta" id="HGNC:33887"/>
<dbReference type="DMDM" id="74751389"/>
<dbReference type="jPOST" id="Q8TBR4"/>
<dbReference type="MassIVE" id="Q8TBR4"/>
<dbReference type="PeptideAtlas" id="Q8TBR4"/>
<dbReference type="ProteomicsDB" id="74040"/>
<dbReference type="AGR" id="HGNC:33887"/>
<dbReference type="GeneCards" id="STAG3L4"/>
<dbReference type="HGNC" id="HGNC:33887">
    <property type="gene designation" value="STAG3L4"/>
</dbReference>
<dbReference type="neXtProt" id="NX_Q8TBR4"/>
<dbReference type="PharmGKB" id="PA162404933"/>
<dbReference type="InParanoid" id="Q8TBR4"/>
<dbReference type="PAN-GO" id="Q8TBR4">
    <property type="GO annotations" value="5 GO annotations based on evolutionary models"/>
</dbReference>
<dbReference type="PhylomeDB" id="Q8TBR4"/>
<dbReference type="PathwayCommons" id="Q8TBR4"/>
<dbReference type="ChiTaRS" id="STAG3L4">
    <property type="organism name" value="human"/>
</dbReference>
<dbReference type="Pharos" id="Q8TBR4">
    <property type="development level" value="Tdark"/>
</dbReference>
<dbReference type="PRO" id="PR:Q8TBR4"/>
<dbReference type="Proteomes" id="UP000005640">
    <property type="component" value="Unplaced"/>
</dbReference>
<dbReference type="RNAct" id="Q8TBR4">
    <property type="molecule type" value="protein"/>
</dbReference>
<dbReference type="InterPro" id="IPR039662">
    <property type="entry name" value="Cohesin_Scc3/SA"/>
</dbReference>
<dbReference type="InterPro" id="IPR013721">
    <property type="entry name" value="STAG"/>
</dbReference>
<dbReference type="PANTHER" id="PTHR11199:SF8">
    <property type="entry name" value="COHESIN SUBUNIT SA-3"/>
    <property type="match status" value="1"/>
</dbReference>
<dbReference type="PANTHER" id="PTHR11199">
    <property type="entry name" value="STROMAL ANTIGEN"/>
    <property type="match status" value="1"/>
</dbReference>
<dbReference type="Pfam" id="PF08514">
    <property type="entry name" value="STAG"/>
    <property type="match status" value="1"/>
</dbReference>
<accession>Q8TBR4</accession>
<accession>Q9H8W0</accession>
<name>ST3L4_HUMAN</name>
<organism>
    <name type="scientific">Homo sapiens</name>
    <name type="common">Human</name>
    <dbReference type="NCBI Taxonomy" id="9606"/>
    <lineage>
        <taxon>Eukaryota</taxon>
        <taxon>Metazoa</taxon>
        <taxon>Chordata</taxon>
        <taxon>Craniata</taxon>
        <taxon>Vertebrata</taxon>
        <taxon>Euteleostomi</taxon>
        <taxon>Mammalia</taxon>
        <taxon>Eutheria</taxon>
        <taxon>Euarchontoglires</taxon>
        <taxon>Primates</taxon>
        <taxon>Haplorrhini</taxon>
        <taxon>Catarrhini</taxon>
        <taxon>Hominidae</taxon>
        <taxon>Homo</taxon>
    </lineage>
</organism>
<evidence type="ECO:0000269" key="1">
    <source>
    </source>
</evidence>
<evidence type="ECO:0000269" key="2">
    <source ref="4"/>
</evidence>
<evidence type="ECO:0000305" key="3"/>
<gene>
    <name type="primary">STAG3L4</name>
</gene>
<reference key="1">
    <citation type="journal article" date="2004" name="Nat. Genet.">
        <title>Complete sequencing and characterization of 21,243 full-length human cDNAs.</title>
        <authorList>
            <person name="Ota T."/>
            <person name="Suzuki Y."/>
            <person name="Nishikawa T."/>
            <person name="Otsuki T."/>
            <person name="Sugiyama T."/>
            <person name="Irie R."/>
            <person name="Wakamatsu A."/>
            <person name="Hayashi K."/>
            <person name="Sato H."/>
            <person name="Nagai K."/>
            <person name="Kimura K."/>
            <person name="Makita H."/>
            <person name="Sekine M."/>
            <person name="Obayashi M."/>
            <person name="Nishi T."/>
            <person name="Shibahara T."/>
            <person name="Tanaka T."/>
            <person name="Ishii S."/>
            <person name="Yamamoto J."/>
            <person name="Saito K."/>
            <person name="Kawai Y."/>
            <person name="Isono Y."/>
            <person name="Nakamura Y."/>
            <person name="Nagahari K."/>
            <person name="Murakami K."/>
            <person name="Yasuda T."/>
            <person name="Iwayanagi T."/>
            <person name="Wagatsuma M."/>
            <person name="Shiratori A."/>
            <person name="Sudo H."/>
            <person name="Hosoiri T."/>
            <person name="Kaku Y."/>
            <person name="Kodaira H."/>
            <person name="Kondo H."/>
            <person name="Sugawara M."/>
            <person name="Takahashi M."/>
            <person name="Kanda K."/>
            <person name="Yokoi T."/>
            <person name="Furuya T."/>
            <person name="Kikkawa E."/>
            <person name="Omura Y."/>
            <person name="Abe K."/>
            <person name="Kamihara K."/>
            <person name="Katsuta N."/>
            <person name="Sato K."/>
            <person name="Tanikawa M."/>
            <person name="Yamazaki M."/>
            <person name="Ninomiya K."/>
            <person name="Ishibashi T."/>
            <person name="Yamashita H."/>
            <person name="Murakawa K."/>
            <person name="Fujimori K."/>
            <person name="Tanai H."/>
            <person name="Kimata M."/>
            <person name="Watanabe M."/>
            <person name="Hiraoka S."/>
            <person name="Chiba Y."/>
            <person name="Ishida S."/>
            <person name="Ono Y."/>
            <person name="Takiguchi S."/>
            <person name="Watanabe S."/>
            <person name="Yosida M."/>
            <person name="Hotuta T."/>
            <person name="Kusano J."/>
            <person name="Kanehori K."/>
            <person name="Takahashi-Fujii A."/>
            <person name="Hara H."/>
            <person name="Tanase T.-O."/>
            <person name="Nomura Y."/>
            <person name="Togiya S."/>
            <person name="Komai F."/>
            <person name="Hara R."/>
            <person name="Takeuchi K."/>
            <person name="Arita M."/>
            <person name="Imose N."/>
            <person name="Musashino K."/>
            <person name="Yuuki H."/>
            <person name="Oshima A."/>
            <person name="Sasaki N."/>
            <person name="Aotsuka S."/>
            <person name="Yoshikawa Y."/>
            <person name="Matsunawa H."/>
            <person name="Ichihara T."/>
            <person name="Shiohata N."/>
            <person name="Sano S."/>
            <person name="Moriya S."/>
            <person name="Momiyama H."/>
            <person name="Satoh N."/>
            <person name="Takami S."/>
            <person name="Terashima Y."/>
            <person name="Suzuki O."/>
            <person name="Nakagawa S."/>
            <person name="Senoh A."/>
            <person name="Mizoguchi H."/>
            <person name="Goto Y."/>
            <person name="Shimizu F."/>
            <person name="Wakebe H."/>
            <person name="Hishigaki H."/>
            <person name="Watanabe T."/>
            <person name="Sugiyama A."/>
            <person name="Takemoto M."/>
            <person name="Kawakami B."/>
            <person name="Yamazaki M."/>
            <person name="Watanabe K."/>
            <person name="Kumagai A."/>
            <person name="Itakura S."/>
            <person name="Fukuzumi Y."/>
            <person name="Fujimori Y."/>
            <person name="Komiyama M."/>
            <person name="Tashiro H."/>
            <person name="Tanigami A."/>
            <person name="Fujiwara T."/>
            <person name="Ono T."/>
            <person name="Yamada K."/>
            <person name="Fujii Y."/>
            <person name="Ozaki K."/>
            <person name="Hirao M."/>
            <person name="Ohmori Y."/>
            <person name="Kawabata A."/>
            <person name="Hikiji T."/>
            <person name="Kobatake N."/>
            <person name="Inagaki H."/>
            <person name="Ikema Y."/>
            <person name="Okamoto S."/>
            <person name="Okitani R."/>
            <person name="Kawakami T."/>
            <person name="Noguchi S."/>
            <person name="Itoh T."/>
            <person name="Shigeta K."/>
            <person name="Senba T."/>
            <person name="Matsumura K."/>
            <person name="Nakajima Y."/>
            <person name="Mizuno T."/>
            <person name="Morinaga M."/>
            <person name="Sasaki M."/>
            <person name="Togashi T."/>
            <person name="Oyama M."/>
            <person name="Hata H."/>
            <person name="Watanabe M."/>
            <person name="Komatsu T."/>
            <person name="Mizushima-Sugano J."/>
            <person name="Satoh T."/>
            <person name="Shirai Y."/>
            <person name="Takahashi Y."/>
            <person name="Nakagawa K."/>
            <person name="Okumura K."/>
            <person name="Nagase T."/>
            <person name="Nomura N."/>
            <person name="Kikuchi H."/>
            <person name="Masuho Y."/>
            <person name="Yamashita R."/>
            <person name="Nakai K."/>
            <person name="Yada T."/>
            <person name="Nakamura Y."/>
            <person name="Ohara O."/>
            <person name="Isogai T."/>
            <person name="Sugano S."/>
        </authorList>
    </citation>
    <scope>NUCLEOTIDE SEQUENCE [LARGE SCALE MRNA]</scope>
    <scope>VARIANT GLN-116</scope>
</reference>
<reference key="2">
    <citation type="submission" date="2004-06" db="EMBL/GenBank/DDBJ databases">
        <title>Cloning of human full open reading frames in Gateway(TM) system entry vector (pDONR201).</title>
        <authorList>
            <person name="Ebert L."/>
            <person name="Schick M."/>
            <person name="Neubert P."/>
            <person name="Schatten R."/>
            <person name="Henze S."/>
            <person name="Korn B."/>
        </authorList>
    </citation>
    <scope>NUCLEOTIDE SEQUENCE [LARGE SCALE MRNA]</scope>
</reference>
<reference key="3">
    <citation type="journal article" date="2003" name="Nature">
        <title>The DNA sequence of human chromosome 7.</title>
        <authorList>
            <person name="Hillier L.W."/>
            <person name="Fulton R.S."/>
            <person name="Fulton L.A."/>
            <person name="Graves T.A."/>
            <person name="Pepin K.H."/>
            <person name="Wagner-McPherson C."/>
            <person name="Layman D."/>
            <person name="Maas J."/>
            <person name="Jaeger S."/>
            <person name="Walker R."/>
            <person name="Wylie K."/>
            <person name="Sekhon M."/>
            <person name="Becker M.C."/>
            <person name="O'Laughlin M.D."/>
            <person name="Schaller M.E."/>
            <person name="Fewell G.A."/>
            <person name="Delehaunty K.D."/>
            <person name="Miner T.L."/>
            <person name="Nash W.E."/>
            <person name="Cordes M."/>
            <person name="Du H."/>
            <person name="Sun H."/>
            <person name="Edwards J."/>
            <person name="Bradshaw-Cordum H."/>
            <person name="Ali J."/>
            <person name="Andrews S."/>
            <person name="Isak A."/>
            <person name="Vanbrunt A."/>
            <person name="Nguyen C."/>
            <person name="Du F."/>
            <person name="Lamar B."/>
            <person name="Courtney L."/>
            <person name="Kalicki J."/>
            <person name="Ozersky P."/>
            <person name="Bielicki L."/>
            <person name="Scott K."/>
            <person name="Holmes A."/>
            <person name="Harkins R."/>
            <person name="Harris A."/>
            <person name="Strong C.M."/>
            <person name="Hou S."/>
            <person name="Tomlinson C."/>
            <person name="Dauphin-Kohlberg S."/>
            <person name="Kozlowicz-Reilly A."/>
            <person name="Leonard S."/>
            <person name="Rohlfing T."/>
            <person name="Rock S.M."/>
            <person name="Tin-Wollam A.-M."/>
            <person name="Abbott A."/>
            <person name="Minx P."/>
            <person name="Maupin R."/>
            <person name="Strowmatt C."/>
            <person name="Latreille P."/>
            <person name="Miller N."/>
            <person name="Johnson D."/>
            <person name="Murray J."/>
            <person name="Woessner J.P."/>
            <person name="Wendl M.C."/>
            <person name="Yang S.-P."/>
            <person name="Schultz B.R."/>
            <person name="Wallis J.W."/>
            <person name="Spieth J."/>
            <person name="Bieri T.A."/>
            <person name="Nelson J.O."/>
            <person name="Berkowicz N."/>
            <person name="Wohldmann P.E."/>
            <person name="Cook L.L."/>
            <person name="Hickenbotham M.T."/>
            <person name="Eldred J."/>
            <person name="Williams D."/>
            <person name="Bedell J.A."/>
            <person name="Mardis E.R."/>
            <person name="Clifton S.W."/>
            <person name="Chissoe S.L."/>
            <person name="Marra M.A."/>
            <person name="Raymond C."/>
            <person name="Haugen E."/>
            <person name="Gillett W."/>
            <person name="Zhou Y."/>
            <person name="James R."/>
            <person name="Phelps K."/>
            <person name="Iadanoto S."/>
            <person name="Bubb K."/>
            <person name="Simms E."/>
            <person name="Levy R."/>
            <person name="Clendenning J."/>
            <person name="Kaul R."/>
            <person name="Kent W.J."/>
            <person name="Furey T.S."/>
            <person name="Baertsch R.A."/>
            <person name="Brent M.R."/>
            <person name="Keibler E."/>
            <person name="Flicek P."/>
            <person name="Bork P."/>
            <person name="Suyama M."/>
            <person name="Bailey J.A."/>
            <person name="Portnoy M.E."/>
            <person name="Torrents D."/>
            <person name="Chinwalla A.T."/>
            <person name="Gish W.R."/>
            <person name="Eddy S.R."/>
            <person name="McPherson J.D."/>
            <person name="Olson M.V."/>
            <person name="Eichler E.E."/>
            <person name="Green E.D."/>
            <person name="Waterston R.H."/>
            <person name="Wilson R.K."/>
        </authorList>
    </citation>
    <scope>NUCLEOTIDE SEQUENCE [LARGE SCALE GENOMIC DNA]</scope>
</reference>
<reference key="4">
    <citation type="submission" date="2005-07" db="EMBL/GenBank/DDBJ databases">
        <authorList>
            <person name="Mural R.J."/>
            <person name="Istrail S."/>
            <person name="Sutton G.G."/>
            <person name="Florea L."/>
            <person name="Halpern A.L."/>
            <person name="Mobarry C.M."/>
            <person name="Lippert R."/>
            <person name="Walenz B."/>
            <person name="Shatkay H."/>
            <person name="Dew I."/>
            <person name="Miller J.R."/>
            <person name="Flanigan M.J."/>
            <person name="Edwards N.J."/>
            <person name="Bolanos R."/>
            <person name="Fasulo D."/>
            <person name="Halldorsson B.V."/>
            <person name="Hannenhalli S."/>
            <person name="Turner R."/>
            <person name="Yooseph S."/>
            <person name="Lu F."/>
            <person name="Nusskern D.R."/>
            <person name="Shue B.C."/>
            <person name="Zheng X.H."/>
            <person name="Zhong F."/>
            <person name="Delcher A.L."/>
            <person name="Huson D.H."/>
            <person name="Kravitz S.A."/>
            <person name="Mouchard L."/>
            <person name="Reinert K."/>
            <person name="Remington K.A."/>
            <person name="Clark A.G."/>
            <person name="Waterman M.S."/>
            <person name="Eichler E.E."/>
            <person name="Adams M.D."/>
            <person name="Hunkapiller M.W."/>
            <person name="Myers E.W."/>
            <person name="Venter J.C."/>
        </authorList>
    </citation>
    <scope>NUCLEOTIDE SEQUENCE [LARGE SCALE GENOMIC DNA]</scope>
    <scope>VARIANT GLN-116</scope>
</reference>
<reference key="5">
    <citation type="journal article" date="2004" name="Genome Res.">
        <title>The status, quality, and expansion of the NIH full-length cDNA project: the Mammalian Gene Collection (MGC).</title>
        <authorList>
            <consortium name="The MGC Project Team"/>
        </authorList>
    </citation>
    <scope>NUCLEOTIDE SEQUENCE [LARGE SCALE MRNA]</scope>
    <source>
        <tissue>Lung</tissue>
    </source>
</reference>
<proteinExistence type="uncertain"/>
<protein>
    <recommendedName>
        <fullName>Putative STAG3-like protein 4</fullName>
    </recommendedName>
    <alternativeName>
        <fullName>Stromal antigen 3-like protein 4</fullName>
    </alternativeName>
</protein>
<keyword id="KW-1185">Reference proteome</keyword>
<sequence length="150" mass="17020">MSGWIATSKTRMQDFWSLLTFSSDLVDVKDSGDYPLTAPGLSWKKFQGSFCEFVGTLVCRCQYILLHDDFPMDNLISLLTGFSDSQVCAFCHTSTLAAMKLMTSLVRVALQLSLHEDINQRQYEAERNKGPGQRAPERLESLLEKHKELH</sequence>
<feature type="chain" id="PRO_0000320647" description="Putative STAG3-like protein 4">
    <location>
        <begin position="1"/>
        <end position="150"/>
    </location>
</feature>
<feature type="sequence variant" id="VAR_039255" description="In dbSNP:rs1045513." evidence="1 2">
    <original>E</original>
    <variation>Q</variation>
    <location>
        <position position="116"/>
    </location>
</feature>